<evidence type="ECO:0000255" key="1">
    <source>
        <dbReference type="HAMAP-Rule" id="MF_00433"/>
    </source>
</evidence>
<organism>
    <name type="scientific">Coffea arabica</name>
    <name type="common">Arabian coffee</name>
    <dbReference type="NCBI Taxonomy" id="13443"/>
    <lineage>
        <taxon>Eukaryota</taxon>
        <taxon>Viridiplantae</taxon>
        <taxon>Streptophyta</taxon>
        <taxon>Embryophyta</taxon>
        <taxon>Tracheophyta</taxon>
        <taxon>Spermatophyta</taxon>
        <taxon>Magnoliopsida</taxon>
        <taxon>eudicotyledons</taxon>
        <taxon>Gunneridae</taxon>
        <taxon>Pentapetalae</taxon>
        <taxon>asterids</taxon>
        <taxon>lamiids</taxon>
        <taxon>Gentianales</taxon>
        <taxon>Rubiaceae</taxon>
        <taxon>Ixoroideae</taxon>
        <taxon>Gardenieae complex</taxon>
        <taxon>Bertiereae - Coffeeae clade</taxon>
        <taxon>Coffeeae</taxon>
        <taxon>Coffea</taxon>
    </lineage>
</organism>
<sequence>MLTITSYFGFLLAALTITSALFIGLNKIRLI</sequence>
<reference key="1">
    <citation type="journal article" date="2007" name="Plant Biotechnol. J.">
        <title>The complete nucleotide sequence of the coffee (Coffea arabica L.) chloroplast genome: organization and implications for biotechnology and phylogenetic relationships amongst angiosperms.</title>
        <authorList>
            <person name="Samson N."/>
            <person name="Bausher M.G."/>
            <person name="Lee S.-B."/>
            <person name="Jansen R.K."/>
            <person name="Daniell H."/>
        </authorList>
    </citation>
    <scope>NUCLEOTIDE SEQUENCE [LARGE SCALE GENOMIC DNA]</scope>
</reference>
<proteinExistence type="inferred from homology"/>
<name>PETL_COFAR</name>
<protein>
    <recommendedName>
        <fullName evidence="1">Cytochrome b6-f complex subunit 6</fullName>
    </recommendedName>
    <alternativeName>
        <fullName evidence="1">Cytochrome b6-f complex subunit PetL</fullName>
    </alternativeName>
    <alternativeName>
        <fullName evidence="1">Cytochrome b6-f complex subunit VI</fullName>
    </alternativeName>
</protein>
<dbReference type="EMBL" id="EF044213">
    <property type="protein sequence ID" value="ABJ89697.1"/>
    <property type="molecule type" value="Genomic_DNA"/>
</dbReference>
<dbReference type="RefSeq" id="YP_817500.1">
    <property type="nucleotide sequence ID" value="NC_008535.1"/>
</dbReference>
<dbReference type="SMR" id="A0A353"/>
<dbReference type="GeneID" id="4421781"/>
<dbReference type="OrthoDB" id="738066at2759"/>
<dbReference type="Proteomes" id="UP000515148">
    <property type="component" value="Chloroplast Pltd"/>
</dbReference>
<dbReference type="GO" id="GO:0009535">
    <property type="term" value="C:chloroplast thylakoid membrane"/>
    <property type="evidence" value="ECO:0007669"/>
    <property type="project" value="UniProtKB-SubCell"/>
</dbReference>
<dbReference type="GO" id="GO:0009512">
    <property type="term" value="C:cytochrome b6f complex"/>
    <property type="evidence" value="ECO:0007669"/>
    <property type="project" value="InterPro"/>
</dbReference>
<dbReference type="GO" id="GO:0045158">
    <property type="term" value="F:electron transporter, transferring electrons within cytochrome b6/f complex of photosystem II activity"/>
    <property type="evidence" value="ECO:0007669"/>
    <property type="project" value="UniProtKB-UniRule"/>
</dbReference>
<dbReference type="GO" id="GO:0015979">
    <property type="term" value="P:photosynthesis"/>
    <property type="evidence" value="ECO:0007669"/>
    <property type="project" value="UniProtKB-KW"/>
</dbReference>
<dbReference type="HAMAP" id="MF_00433">
    <property type="entry name" value="Cytb6_f_PetL"/>
    <property type="match status" value="1"/>
</dbReference>
<dbReference type="InterPro" id="IPR007802">
    <property type="entry name" value="Cyt_b6/f_cplx_su6"/>
</dbReference>
<dbReference type="PANTHER" id="PTHR37266">
    <property type="entry name" value="CYTOCHROME B6-F COMPLEX SUBUNIT 6"/>
    <property type="match status" value="1"/>
</dbReference>
<dbReference type="PANTHER" id="PTHR37266:SF1">
    <property type="entry name" value="CYTOCHROME B6-F COMPLEX SUBUNIT 6"/>
    <property type="match status" value="1"/>
</dbReference>
<dbReference type="Pfam" id="PF05115">
    <property type="entry name" value="PetL"/>
    <property type="match status" value="1"/>
</dbReference>
<dbReference type="SUPFAM" id="SSF103436">
    <property type="entry name" value="PetL subunit of the cytochrome b6f complex"/>
    <property type="match status" value="1"/>
</dbReference>
<comment type="function">
    <text evidence="1">Component of the cytochrome b6-f complex, which mediates electron transfer between photosystem II (PSII) and photosystem I (PSI), cyclic electron flow around PSI, and state transitions. PetL is important for photoautotrophic growth as well as for electron transfer efficiency and stability of the cytochrome b6-f complex.</text>
</comment>
<comment type="subunit">
    <text evidence="1">The 4 large subunits of the cytochrome b6-f complex are cytochrome b6, subunit IV (17 kDa polypeptide, PetD), cytochrome f and the Rieske protein, while the 4 small subunits are PetG, PetL, PetM and PetN. The complex functions as a dimer.</text>
</comment>
<comment type="subcellular location">
    <subcellularLocation>
        <location evidence="1">Plastid</location>
        <location evidence="1">Chloroplast thylakoid membrane</location>
        <topology evidence="1">Single-pass membrane protein</topology>
    </subcellularLocation>
</comment>
<comment type="similarity">
    <text evidence="1">Belongs to the PetL family.</text>
</comment>
<gene>
    <name evidence="1" type="primary">petL</name>
</gene>
<accession>A0A353</accession>
<geneLocation type="chloroplast"/>
<feature type="chain" id="PRO_0000275522" description="Cytochrome b6-f complex subunit 6">
    <location>
        <begin position="1"/>
        <end position="31"/>
    </location>
</feature>
<feature type="transmembrane region" description="Helical" evidence="1">
    <location>
        <begin position="4"/>
        <end position="24"/>
    </location>
</feature>
<keyword id="KW-0150">Chloroplast</keyword>
<keyword id="KW-0249">Electron transport</keyword>
<keyword id="KW-0472">Membrane</keyword>
<keyword id="KW-0602">Photosynthesis</keyword>
<keyword id="KW-0934">Plastid</keyword>
<keyword id="KW-1185">Reference proteome</keyword>
<keyword id="KW-0793">Thylakoid</keyword>
<keyword id="KW-0812">Transmembrane</keyword>
<keyword id="KW-1133">Transmembrane helix</keyword>
<keyword id="KW-0813">Transport</keyword>